<gene>
    <name type="primary">Upk2</name>
</gene>
<feature type="signal peptide" evidence="2">
    <location>
        <begin position="1"/>
        <end position="25"/>
    </location>
</feature>
<feature type="propeptide" id="PRO_0000022632" evidence="2">
    <location>
        <begin position="26"/>
        <end position="84"/>
    </location>
</feature>
<feature type="chain" id="PRO_0000022633" description="Uroplakin-2">
    <location>
        <begin position="85"/>
        <end position="184"/>
    </location>
</feature>
<feature type="topological domain" description="Lumenal" evidence="2">
    <location>
        <begin position="85"/>
        <end position="155"/>
    </location>
</feature>
<feature type="transmembrane region" description="Helical" evidence="2">
    <location>
        <begin position="156"/>
        <end position="180"/>
    </location>
</feature>
<feature type="topological domain" description="Cytoplasmic" evidence="2">
    <location>
        <begin position="181"/>
        <end position="184"/>
    </location>
</feature>
<feature type="glycosylation site" description="N-linked (GlcNAc...) asparagine" evidence="2">
    <location>
        <position position="28"/>
    </location>
</feature>
<feature type="glycosylation site" description="N-linked (GlcNAc...) asparagine" evidence="2">
    <location>
        <position position="57"/>
    </location>
</feature>
<feature type="glycosylation site" description="N-linked (GlcNAc...) asparagine" evidence="2">
    <location>
        <position position="66"/>
    </location>
</feature>
<protein>
    <recommendedName>
        <fullName>Uroplakin-2</fullName>
        <shortName>UP2</shortName>
    </recommendedName>
    <alternativeName>
        <fullName>Uroplakin II</fullName>
        <shortName>UPII</shortName>
    </alternativeName>
</protein>
<name>UPK2_MOUSE</name>
<sequence length="184" mass="19572">MASTLPVQTLPLILILLAVLAPGTADFNISSLSGLLSPALTESLLIALPPCHLTGGNATLMVRRANDSKVVKSDFVVPPCRGRRELVSVVDSGSGYTVTRLSAYQVTNLTPGTKYYISYRVQKGTSTESSPETPMSTLPRKNMESIGLGMARTGGMVVITVLLSVAMFLLVVGLIVALHWDARK</sequence>
<proteinExistence type="evidence at transcript level"/>
<evidence type="ECO:0000250" key="1"/>
<evidence type="ECO:0000255" key="2"/>
<evidence type="ECO:0000305" key="3"/>
<dbReference type="EMBL" id="U08030">
    <property type="protein sequence ID" value="AAA19602.1"/>
    <property type="molecule type" value="mRNA"/>
</dbReference>
<dbReference type="EMBL" id="U14421">
    <property type="protein sequence ID" value="AAC52158.1"/>
    <property type="molecule type" value="Genomic_DNA"/>
</dbReference>
<dbReference type="CCDS" id="CCDS23112.1"/>
<dbReference type="PIR" id="A55603">
    <property type="entry name" value="A54135"/>
</dbReference>
<dbReference type="SMR" id="P38575"/>
<dbReference type="FunCoup" id="P38575">
    <property type="interactions" value="42"/>
</dbReference>
<dbReference type="STRING" id="10090.ENSMUSP00000040481"/>
<dbReference type="GlyCosmos" id="P38575">
    <property type="glycosylation" value="3 sites, No reported glycans"/>
</dbReference>
<dbReference type="GlyGen" id="P38575">
    <property type="glycosylation" value="3 sites"/>
</dbReference>
<dbReference type="PhosphoSitePlus" id="P38575"/>
<dbReference type="PaxDb" id="10090-ENSMUSP00000040481"/>
<dbReference type="ProteomicsDB" id="297870"/>
<dbReference type="AGR" id="MGI:98913"/>
<dbReference type="MGI" id="MGI:98913">
    <property type="gene designation" value="Upk2"/>
</dbReference>
<dbReference type="eggNOG" id="KOG2294">
    <property type="taxonomic scope" value="Eukaryota"/>
</dbReference>
<dbReference type="InParanoid" id="P38575"/>
<dbReference type="PhylomeDB" id="P38575"/>
<dbReference type="PRO" id="PR:P38575"/>
<dbReference type="Proteomes" id="UP000000589">
    <property type="component" value="Unplaced"/>
</dbReference>
<dbReference type="RNAct" id="P38575">
    <property type="molecule type" value="protein"/>
</dbReference>
<dbReference type="GO" id="GO:0016324">
    <property type="term" value="C:apical plasma membrane"/>
    <property type="evidence" value="ECO:0000314"/>
    <property type="project" value="MGI"/>
</dbReference>
<dbReference type="GO" id="GO:0120001">
    <property type="term" value="C:apical plasma membrane urothelial plaque"/>
    <property type="evidence" value="ECO:0000314"/>
    <property type="project" value="MGI"/>
</dbReference>
<dbReference type="CDD" id="cd09967">
    <property type="entry name" value="UP_II"/>
    <property type="match status" value="1"/>
</dbReference>
<dbReference type="InterPro" id="IPR009952">
    <property type="entry name" value="Uroplakin-2"/>
</dbReference>
<dbReference type="PANTHER" id="PTHR17573">
    <property type="entry name" value="UROPLAKIN II"/>
    <property type="match status" value="1"/>
</dbReference>
<dbReference type="PANTHER" id="PTHR17573:SF0">
    <property type="entry name" value="UROPLAKIN-2"/>
    <property type="match status" value="1"/>
</dbReference>
<dbReference type="Pfam" id="PF07353">
    <property type="entry name" value="Uroplakin_II"/>
    <property type="match status" value="1"/>
</dbReference>
<dbReference type="PIRSF" id="PIRSF016439">
    <property type="entry name" value="Uroplakin_II"/>
    <property type="match status" value="1"/>
</dbReference>
<reference key="1">
    <citation type="journal article" date="1994" name="J. Biol. Chem.">
        <title>Mammalian uroplakins. A group of highly conserved urothelial differentiation-related membrane proteins.</title>
        <authorList>
            <person name="Wu X.-R."/>
            <person name="Lin J.-H."/>
            <person name="Walz T."/>
            <person name="Haener M."/>
            <person name="Yu J."/>
            <person name="Aebi U."/>
            <person name="Sun T.-T."/>
        </authorList>
    </citation>
    <scope>NUCLEOTIDE SEQUENCE [MRNA]</scope>
</reference>
<reference key="2">
    <citation type="journal article" date="1995" name="Proc. Natl. Acad. Sci. U.S.A.">
        <title>A tissue-specific promoter that can drive a foreign gene to express in the suprabasal urothelial cells of transgenic mice.</title>
        <authorList>
            <person name="Lin J.-H."/>
            <person name="Zhao H."/>
            <person name="Sun T.-T."/>
        </authorList>
    </citation>
    <scope>NUCLEOTIDE SEQUENCE [GENOMIC DNA]</scope>
    <source>
        <strain>BALB/cJ</strain>
    </source>
</reference>
<organism>
    <name type="scientific">Mus musculus</name>
    <name type="common">Mouse</name>
    <dbReference type="NCBI Taxonomy" id="10090"/>
    <lineage>
        <taxon>Eukaryota</taxon>
        <taxon>Metazoa</taxon>
        <taxon>Chordata</taxon>
        <taxon>Craniata</taxon>
        <taxon>Vertebrata</taxon>
        <taxon>Euteleostomi</taxon>
        <taxon>Mammalia</taxon>
        <taxon>Eutheria</taxon>
        <taxon>Euarchontoglires</taxon>
        <taxon>Glires</taxon>
        <taxon>Rodentia</taxon>
        <taxon>Myomorpha</taxon>
        <taxon>Muroidea</taxon>
        <taxon>Muridae</taxon>
        <taxon>Murinae</taxon>
        <taxon>Mus</taxon>
        <taxon>Mus</taxon>
    </lineage>
</organism>
<accession>P38575</accession>
<comment type="function">
    <text>Component of the asymmetric unit membrane (AUM); a highly specialized biomembrane elaborated by terminally differentiated urothelial cells. May play an important role in regulating the assembly of the AUM.</text>
</comment>
<comment type="subunit">
    <text evidence="1">Interacts with uroplakin-1a (UPK1A).</text>
</comment>
<comment type="subcellular location">
    <subcellularLocation>
        <location evidence="3">Cell membrane</location>
        <topology evidence="3">Single-pass type I membrane protein</topology>
    </subcellularLocation>
    <text evidence="1">Heterodimer formation with UPK1A is a prerequisite to exit out of the endoplasmic reticulum (ER).</text>
</comment>
<comment type="similarity">
    <text evidence="3">Belongs to the uroplakin-2 family.</text>
</comment>
<keyword id="KW-1003">Cell membrane</keyword>
<keyword id="KW-0165">Cleavage on pair of basic residues</keyword>
<keyword id="KW-0325">Glycoprotein</keyword>
<keyword id="KW-0472">Membrane</keyword>
<keyword id="KW-1185">Reference proteome</keyword>
<keyword id="KW-0732">Signal</keyword>
<keyword id="KW-0812">Transmembrane</keyword>
<keyword id="KW-1133">Transmembrane helix</keyword>